<sequence>MAEGGQAQQQPPQLGPGAAARGMKRESEVELPVPGAGADGPEPGLSKRPRTEEAADGGMQNEPLTPGYHGFPARDGQGNQEPTTTPDAMVQPFTTIPFPPPPQNGIPTEYGVPHTQDYAGQTSEHNLTLYGSTQPHGEQSSNSPSNQNGSLTQTEGGAQTDGQQSQTQSSENSESKSTPKRLHVSNIPFRFRDPDLRQMFGQFGKILDVEIIFNERGSKGFGFVTFENSADADRAREKLHGTVVEGRKIEVNNATARVMTNKKMVTPYANGWKLSPVVGAVYGPELYAASSFQADVSLGNEAAVPLSGRGGINTYIPLISLPLVPGFPYPTAATTAAAFRGAHLRGRGRTVYGAVRAVPPTAIPAYPGVVYQDGFYGADLYGGYAAYRYAQPATATAATAAAAAAAAYSDGYGRVYTADPYHALAPAASYGVGAVASLYRGGYSRFAPY</sequence>
<proteinExistence type="evidence at protein level"/>
<feature type="chain" id="PRO_0000317115" description="RNA binding protein fox-1 homolog 2">
    <location>
        <begin position="1"/>
        <end position="449"/>
    </location>
</feature>
<feature type="domain" description="RRM" evidence="4">
    <location>
        <begin position="180"/>
        <end position="256"/>
    </location>
</feature>
<feature type="region of interest" description="Disordered" evidence="5">
    <location>
        <begin position="1"/>
        <end position="186"/>
    </location>
</feature>
<feature type="compositionally biased region" description="Low complexity" evidence="5">
    <location>
        <begin position="1"/>
        <end position="21"/>
    </location>
</feature>
<feature type="compositionally biased region" description="Polar residues" evidence="5">
    <location>
        <begin position="77"/>
        <end position="86"/>
    </location>
</feature>
<feature type="compositionally biased region" description="Polar residues" evidence="5">
    <location>
        <begin position="118"/>
        <end position="138"/>
    </location>
</feature>
<feature type="compositionally biased region" description="Low complexity" evidence="5">
    <location>
        <begin position="139"/>
        <end position="176"/>
    </location>
</feature>
<feature type="site" description="Interaction with RNA" evidence="1">
    <location>
        <position position="181"/>
    </location>
</feature>
<feature type="site" description="Interaction with RNA" evidence="1">
    <location>
        <position position="189"/>
    </location>
</feature>
<feature type="site" description="Interaction with RNA" evidence="1">
    <location>
        <position position="190"/>
    </location>
</feature>
<feature type="site" description="Interaction with RNA" evidence="1">
    <location>
        <position position="214"/>
    </location>
</feature>
<feature type="site" description="Interaction with RNA" evidence="1">
    <location>
        <position position="219"/>
    </location>
</feature>
<feature type="site" description="Interaction with RNA" evidence="1">
    <location>
        <position position="223"/>
    </location>
</feature>
<feature type="site" description="Interaction with RNA" evidence="1">
    <location>
        <position position="247"/>
    </location>
</feature>
<feature type="site" description="Interaction with RNA" evidence="1">
    <location>
        <position position="257"/>
    </location>
</feature>
<feature type="modified residue" description="Omega-N-methylarginine" evidence="20">
    <location>
        <position position="340"/>
    </location>
</feature>
<feature type="modified residue" description="Asymmetric dimethylarginine" evidence="20">
    <location>
        <position position="356"/>
    </location>
</feature>
<feature type="modified residue" description="Asymmetric dimethylarginine" evidence="20">
    <location>
        <position position="388"/>
    </location>
</feature>
<feature type="modified residue" description="Asymmetric dimethylarginine; alternate" evidence="20">
    <location>
        <position position="440"/>
    </location>
</feature>
<feature type="modified residue" description="Omega-N-methylarginine; alternate" evidence="20">
    <location>
        <position position="440"/>
    </location>
</feature>
<feature type="modified residue" description="Asymmetric dimethylarginine; alternate" evidence="20">
    <location>
        <position position="445"/>
    </location>
</feature>
<feature type="modified residue" description="Omega-N-methylarginine; alternate" evidence="20">
    <location>
        <position position="445"/>
    </location>
</feature>
<feature type="splice variant" id="VSP_030892" description="In isoform 3, isoform 4, isoform 6, isoform 7, isoform 8 and isoform 9." evidence="13 14 15 16 17 18">
    <original>MAEGGQAQQQPPQLGPGAAARGMKRESEVELPVPGAGADGPEPGLSKRPRTEEAADGGMQNEPLTPGYHGFPARDG</original>
    <variation>MEKKKMVT</variation>
    <location>
        <begin position="1"/>
        <end position="76"/>
    </location>
</feature>
<feature type="splice variant" id="VSP_030893" description="In isoform 2." evidence="18">
    <location>
        <begin position="19"/>
        <end position="36"/>
    </location>
</feature>
<feature type="splice variant" id="VSP_030894" description="In isoform 9." evidence="15 18">
    <location>
        <begin position="153"/>
        <end position="250"/>
    </location>
</feature>
<feature type="splice variant" id="VSP_030895" description="In isoform 4." evidence="18">
    <location>
        <position position="153"/>
    </location>
</feature>
<feature type="splice variant" id="VSP_030896" description="In isoform 4." evidence="18">
    <location>
        <begin position="220"/>
        <end position="250"/>
    </location>
</feature>
<feature type="splice variant" id="VSP_030897" description="In isoform 2, isoform 4, isoform 5, isoform 6, isoform 7 and isoform 8." evidence="13 14 15 16 17 18">
    <original>SLPLV</original>
    <variation>I</variation>
    <location>
        <begin position="320"/>
        <end position="324"/>
    </location>
</feature>
<feature type="splice variant" id="VSP_030898" description="In isoform 4 and isoform 8." evidence="15 18">
    <original>VVYQDGFYGADLY</original>
    <variation>IVLQEPIISAKIPQ</variation>
    <location>
        <begin position="369"/>
        <end position="381"/>
    </location>
</feature>
<feature type="splice variant" id="VSP_030899" description="In isoform 5." evidence="14">
    <original>VYQDGFYGADLYGGYAAYRYAQPATATAATAAAAAAAAYSDGYGRVYTADPYHALAPAASYGVGAVASLYRGGYSRFAPY</original>
    <variation>DMQPTDMHSLLLQPQPQLLQPLQPLTATVTAGCTQLTPTMPSPLPPAMELALWRVCTEVATADLPPTEVT</variation>
    <location>
        <begin position="370"/>
        <end position="449"/>
    </location>
</feature>
<feature type="splice variant" id="VSP_030900" description="In isoform 6." evidence="16">
    <original>DGFYGADLYGGYAAYRYAQPATATAATAAAAAAAAYSDGYGRVYTADPYHALAPAASYGVGAVASLYRGGYSRFAPY</original>
    <variation>DMQPTDMHSLLLQPQPQLLQPLQPLTATVTAGCTQLTPTMPSPLPPAMELAL</variation>
    <location>
        <begin position="373"/>
        <end position="449"/>
    </location>
</feature>
<feature type="sequence conflict" description="In Ref. 5; BAC32147." evidence="19" ref="5">
    <original>A</original>
    <variation>G</variation>
    <location>
        <position position="88"/>
    </location>
</feature>
<feature type="sequence conflict" description="In Ref. 3; AAL71902." evidence="19" ref="3">
    <original>L</original>
    <variation>M</variation>
    <location>
        <position position="306"/>
    </location>
</feature>
<feature type="sequence conflict" description="In Ref. 5; BAC36885." evidence="19" ref="5">
    <original>A</original>
    <variation>D</variation>
    <location>
        <position position="342"/>
    </location>
</feature>
<feature type="modified residue" description="Omega-N-methylarginine" evidence="20">
    <location sequence="Q8BP71-2">
        <position position="318"/>
    </location>
</feature>
<feature type="modified residue" description="Omega-N-methylarginine" evidence="20">
    <location sequence="Q8BP71-2">
        <position position="323"/>
    </location>
</feature>
<feature type="modified residue" description="Omega-N-methylarginine" evidence="20">
    <location sequence="Q8BP71-4">
        <position position="236"/>
    </location>
</feature>
<feature type="modified residue" description="Omega-N-methylarginine" evidence="20">
    <location sequence="Q8BP71-4">
        <position position="241"/>
    </location>
</feature>
<feature type="modified residue" description="Asymmetric dimethylarginine" evidence="20">
    <location sequence="Q8BP71-4">
        <position position="285"/>
    </location>
</feature>
<feature type="modified residue" description="Omega-N-methylarginine" evidence="20">
    <location sequence="Q8BP71-5">
        <position position="336"/>
    </location>
</feature>
<feature type="modified residue" description="Omega-N-methylarginine" evidence="20">
    <location sequence="Q8BP71-5">
        <position position="341"/>
    </location>
</feature>
<feature type="modified residue" description="Omega-N-methylarginine" evidence="20">
    <location sequence="Q8BP71-6">
        <position position="268"/>
    </location>
</feature>
<feature type="modified residue" description="Omega-N-methylarginine" evidence="20">
    <location sequence="Q8BP71-6">
        <position position="273"/>
    </location>
</feature>
<feature type="modified residue" description="Omega-N-methylarginine" evidence="20">
    <location sequence="Q8BP71-7">
        <position position="268"/>
    </location>
</feature>
<feature type="modified residue" description="Omega-N-methylarginine" evidence="20">
    <location sequence="Q8BP71-7">
        <position position="273"/>
    </location>
</feature>
<feature type="modified residue" description="Omega-N-methylarginine" evidence="20">
    <location sequence="Q8BP71-8">
        <position position="268"/>
    </location>
</feature>
<feature type="modified residue" description="Omega-N-methylarginine" evidence="20">
    <location sequence="Q8BP71-8">
        <position position="273"/>
    </location>
</feature>
<feature type="modified residue" description="Asymmetric dimethylarginine" evidence="20">
    <location sequence="Q8BP71-8">
        <position position="317"/>
    </location>
</feature>
<organism>
    <name type="scientific">Mus musculus</name>
    <name type="common">Mouse</name>
    <dbReference type="NCBI Taxonomy" id="10090"/>
    <lineage>
        <taxon>Eukaryota</taxon>
        <taxon>Metazoa</taxon>
        <taxon>Chordata</taxon>
        <taxon>Craniata</taxon>
        <taxon>Vertebrata</taxon>
        <taxon>Euteleostomi</taxon>
        <taxon>Mammalia</taxon>
        <taxon>Eutheria</taxon>
        <taxon>Euarchontoglires</taxon>
        <taxon>Glires</taxon>
        <taxon>Rodentia</taxon>
        <taxon>Myomorpha</taxon>
        <taxon>Muroidea</taxon>
        <taxon>Muridae</taxon>
        <taxon>Murinae</taxon>
        <taxon>Mus</taxon>
        <taxon>Mus</taxon>
    </lineage>
</organism>
<accession>Q8BP71</accession>
<accession>Q0R5Z7</accession>
<accession>Q0R5Z8</accession>
<accession>Q0VH84</accession>
<accession>Q537D4</accession>
<accession>Q537D5</accession>
<accession>Q8BRG0</accession>
<accession>Q8R2T5</accession>
<accession>Q8VI62</accession>
<accession>Q923W8</accession>
<name>RFOX2_MOUSE</name>
<gene>
    <name type="primary">Rbfox2</name>
    <name type="synonym">Fox2</name>
    <name type="synonym">Fxh</name>
    <name type="synonym">Hrnbp2</name>
    <name type="synonym">Rbm9</name>
</gene>
<protein>
    <recommendedName>
        <fullName>RNA binding protein fox-1 homolog 2</fullName>
    </recommendedName>
    <alternativeName>
        <fullName>Fox-1 homolog B</fullName>
    </alternativeName>
    <alternativeName>
        <fullName>Fox-1 homolog Fxh</fullName>
    </alternativeName>
    <alternativeName>
        <fullName>Hexaribonucleotide-binding protein 2</fullName>
    </alternativeName>
    <alternativeName>
        <fullName>RNA-binding motif protein 9</fullName>
    </alternativeName>
    <alternativeName>
        <fullName>RNA-binding protein 9</fullName>
    </alternativeName>
</protein>
<reference key="1">
    <citation type="journal article" date="2001" name="Biochem. Biophys. Res. Commun.">
        <title>Androgens regulate the mammalian homologues of invertebrate sex determination genes tra-2 and fox-1.</title>
        <authorList>
            <person name="Lieberman A.P."/>
            <person name="Friedlich D.L."/>
            <person name="Harmison G."/>
            <person name="Howell B.W."/>
            <person name="Jordan C.L."/>
            <person name="Breedlove S.M."/>
            <person name="Fischbeck K.H."/>
        </authorList>
    </citation>
    <scope>NUCLEOTIDE SEQUENCE [MRNA] (ISOFORM 7)</scope>
    <scope>SUBCELLULAR LOCATION</scope>
    <scope>INDUCTION</scope>
    <scope>TISSUE SPECIFICITY</scope>
</reference>
<reference key="2">
    <citation type="journal article" date="2005" name="Nucleic Acids Res.">
        <title>Tissue-dependent isoforms of mammalian Fox-1 homologs are associated with tissue-specific splicing activities.</title>
        <authorList>
            <person name="Nakahata S."/>
            <person name="Kawamoto S."/>
        </authorList>
    </citation>
    <scope>NUCLEOTIDE SEQUENCE [MRNA] (ISOFORMS 7; 8 AND 9)</scope>
    <scope>FUNCTION</scope>
    <scope>SUBCELLULAR LOCATION</scope>
    <source>
        <tissue>Brain</tissue>
        <tissue>Muscle</tissue>
    </source>
</reference>
<reference key="3">
    <citation type="journal article" date="2006" name="J. Biol. Chem.">
        <title>Fox-2 splicing factor binds to a conserved intron motif to promote inclusion of protein 4.1R alternative exon 16.</title>
        <authorList>
            <person name="Ponthier J.L."/>
            <person name="Schluepen C."/>
            <person name="Chen W."/>
            <person name="Lersch R.A."/>
            <person name="Gee S.L."/>
            <person name="Hou V.C."/>
            <person name="Lo A.J."/>
            <person name="Short S.A."/>
            <person name="Chasis J.A."/>
            <person name="Winkelmann J.C."/>
            <person name="Conboy J.G."/>
        </authorList>
    </citation>
    <scope>NUCLEOTIDE SEQUENCE [MRNA] (ISOFORM 7)</scope>
    <scope>FUNCTION</scope>
</reference>
<reference key="4">
    <citation type="journal article" date="2008" name="Blood">
        <title>Regulated Fox-2 isoform expression mediates protein 4.1R splicing during erythroid differentiation.</title>
        <authorList>
            <person name="Yang G."/>
            <person name="Huang S.-C."/>
            <person name="Wu J.Y."/>
            <person name="Benz E.J. Jr."/>
        </authorList>
    </citation>
    <scope>NUCLEOTIDE SEQUENCE [MRNA] (ISOFORMS 2; 3 AND 4)</scope>
    <scope>FUNCTION</scope>
    <scope>SUBCELLULAR LOCATION</scope>
    <source>
        <strain>C57BL/6J</strain>
        <strain>DBA/2J</strain>
    </source>
</reference>
<reference key="5">
    <citation type="journal article" date="2005" name="Science">
        <title>The transcriptional landscape of the mammalian genome.</title>
        <authorList>
            <person name="Carninci P."/>
            <person name="Kasukawa T."/>
            <person name="Katayama S."/>
            <person name="Gough J."/>
            <person name="Frith M.C."/>
            <person name="Maeda N."/>
            <person name="Oyama R."/>
            <person name="Ravasi T."/>
            <person name="Lenhard B."/>
            <person name="Wells C."/>
            <person name="Kodzius R."/>
            <person name="Shimokawa K."/>
            <person name="Bajic V.B."/>
            <person name="Brenner S.E."/>
            <person name="Batalov S."/>
            <person name="Forrest A.R."/>
            <person name="Zavolan M."/>
            <person name="Davis M.J."/>
            <person name="Wilming L.G."/>
            <person name="Aidinis V."/>
            <person name="Allen J.E."/>
            <person name="Ambesi-Impiombato A."/>
            <person name="Apweiler R."/>
            <person name="Aturaliya R.N."/>
            <person name="Bailey T.L."/>
            <person name="Bansal M."/>
            <person name="Baxter L."/>
            <person name="Beisel K.W."/>
            <person name="Bersano T."/>
            <person name="Bono H."/>
            <person name="Chalk A.M."/>
            <person name="Chiu K.P."/>
            <person name="Choudhary V."/>
            <person name="Christoffels A."/>
            <person name="Clutterbuck D.R."/>
            <person name="Crowe M.L."/>
            <person name="Dalla E."/>
            <person name="Dalrymple B.P."/>
            <person name="de Bono B."/>
            <person name="Della Gatta G."/>
            <person name="di Bernardo D."/>
            <person name="Down T."/>
            <person name="Engstrom P."/>
            <person name="Fagiolini M."/>
            <person name="Faulkner G."/>
            <person name="Fletcher C.F."/>
            <person name="Fukushima T."/>
            <person name="Furuno M."/>
            <person name="Futaki S."/>
            <person name="Gariboldi M."/>
            <person name="Georgii-Hemming P."/>
            <person name="Gingeras T.R."/>
            <person name="Gojobori T."/>
            <person name="Green R.E."/>
            <person name="Gustincich S."/>
            <person name="Harbers M."/>
            <person name="Hayashi Y."/>
            <person name="Hensch T.K."/>
            <person name="Hirokawa N."/>
            <person name="Hill D."/>
            <person name="Huminiecki L."/>
            <person name="Iacono M."/>
            <person name="Ikeo K."/>
            <person name="Iwama A."/>
            <person name="Ishikawa T."/>
            <person name="Jakt M."/>
            <person name="Kanapin A."/>
            <person name="Katoh M."/>
            <person name="Kawasawa Y."/>
            <person name="Kelso J."/>
            <person name="Kitamura H."/>
            <person name="Kitano H."/>
            <person name="Kollias G."/>
            <person name="Krishnan S.P."/>
            <person name="Kruger A."/>
            <person name="Kummerfeld S.K."/>
            <person name="Kurochkin I.V."/>
            <person name="Lareau L.F."/>
            <person name="Lazarevic D."/>
            <person name="Lipovich L."/>
            <person name="Liu J."/>
            <person name="Liuni S."/>
            <person name="McWilliam S."/>
            <person name="Madan Babu M."/>
            <person name="Madera M."/>
            <person name="Marchionni L."/>
            <person name="Matsuda H."/>
            <person name="Matsuzawa S."/>
            <person name="Miki H."/>
            <person name="Mignone F."/>
            <person name="Miyake S."/>
            <person name="Morris K."/>
            <person name="Mottagui-Tabar S."/>
            <person name="Mulder N."/>
            <person name="Nakano N."/>
            <person name="Nakauchi H."/>
            <person name="Ng P."/>
            <person name="Nilsson R."/>
            <person name="Nishiguchi S."/>
            <person name="Nishikawa S."/>
            <person name="Nori F."/>
            <person name="Ohara O."/>
            <person name="Okazaki Y."/>
            <person name="Orlando V."/>
            <person name="Pang K.C."/>
            <person name="Pavan W.J."/>
            <person name="Pavesi G."/>
            <person name="Pesole G."/>
            <person name="Petrovsky N."/>
            <person name="Piazza S."/>
            <person name="Reed J."/>
            <person name="Reid J.F."/>
            <person name="Ring B.Z."/>
            <person name="Ringwald M."/>
            <person name="Rost B."/>
            <person name="Ruan Y."/>
            <person name="Salzberg S.L."/>
            <person name="Sandelin A."/>
            <person name="Schneider C."/>
            <person name="Schoenbach C."/>
            <person name="Sekiguchi K."/>
            <person name="Semple C.A."/>
            <person name="Seno S."/>
            <person name="Sessa L."/>
            <person name="Sheng Y."/>
            <person name="Shibata Y."/>
            <person name="Shimada H."/>
            <person name="Shimada K."/>
            <person name="Silva D."/>
            <person name="Sinclair B."/>
            <person name="Sperling S."/>
            <person name="Stupka E."/>
            <person name="Sugiura K."/>
            <person name="Sultana R."/>
            <person name="Takenaka Y."/>
            <person name="Taki K."/>
            <person name="Tammoja K."/>
            <person name="Tan S.L."/>
            <person name="Tang S."/>
            <person name="Taylor M.S."/>
            <person name="Tegner J."/>
            <person name="Teichmann S.A."/>
            <person name="Ueda H.R."/>
            <person name="van Nimwegen E."/>
            <person name="Verardo R."/>
            <person name="Wei C.L."/>
            <person name="Yagi K."/>
            <person name="Yamanishi H."/>
            <person name="Zabarovsky E."/>
            <person name="Zhu S."/>
            <person name="Zimmer A."/>
            <person name="Hide W."/>
            <person name="Bult C."/>
            <person name="Grimmond S.M."/>
            <person name="Teasdale R.D."/>
            <person name="Liu E.T."/>
            <person name="Brusic V."/>
            <person name="Quackenbush J."/>
            <person name="Wahlestedt C."/>
            <person name="Mattick J.S."/>
            <person name="Hume D.A."/>
            <person name="Kai C."/>
            <person name="Sasaki D."/>
            <person name="Tomaru Y."/>
            <person name="Fukuda S."/>
            <person name="Kanamori-Katayama M."/>
            <person name="Suzuki M."/>
            <person name="Aoki J."/>
            <person name="Arakawa T."/>
            <person name="Iida J."/>
            <person name="Imamura K."/>
            <person name="Itoh M."/>
            <person name="Kato T."/>
            <person name="Kawaji H."/>
            <person name="Kawagashira N."/>
            <person name="Kawashima T."/>
            <person name="Kojima M."/>
            <person name="Kondo S."/>
            <person name="Konno H."/>
            <person name="Nakano K."/>
            <person name="Ninomiya N."/>
            <person name="Nishio T."/>
            <person name="Okada M."/>
            <person name="Plessy C."/>
            <person name="Shibata K."/>
            <person name="Shiraki T."/>
            <person name="Suzuki S."/>
            <person name="Tagami M."/>
            <person name="Waki K."/>
            <person name="Watahiki A."/>
            <person name="Okamura-Oho Y."/>
            <person name="Suzuki H."/>
            <person name="Kawai J."/>
            <person name="Hayashizaki Y."/>
        </authorList>
    </citation>
    <scope>NUCLEOTIDE SEQUENCE [LARGE SCALE MRNA] (ISOFORMS 1 AND 6)</scope>
    <source>
        <strain>C57BL/6J</strain>
        <tissue>Embryo</tissue>
    </source>
</reference>
<reference key="6">
    <citation type="journal article" date="2004" name="Genome Res.">
        <title>The status, quality, and expansion of the NIH full-length cDNA project: the Mammalian Gene Collection (MGC).</title>
        <authorList>
            <consortium name="The MGC Project Team"/>
        </authorList>
    </citation>
    <scope>NUCLEOTIDE SEQUENCE [LARGE SCALE MRNA] (ISOFORMS 7 AND 5)</scope>
    <source>
        <strain>Czech II</strain>
        <tissue>Mammary tumor</tissue>
    </source>
</reference>
<reference key="7">
    <citation type="journal article" date="2005" name="Mol. Cell. Biol.">
        <title>Homologues of the Caenorhabditis elegans Fox-1 protein are neuronal splicing regulators in mammals.</title>
        <authorList>
            <person name="Underwood J.G."/>
            <person name="Boutz P.L."/>
            <person name="Dougherty J.D."/>
            <person name="Stoilov P."/>
            <person name="Black D.L."/>
        </authorList>
    </citation>
    <scope>FUNCTION</scope>
    <scope>SUBCELLULAR LOCATION</scope>
    <scope>TISSUE SPECIFICITY</scope>
</reference>
<reference key="8">
    <citation type="journal article" date="2006" name="Mol. Cell. Biol.">
        <title>Fox-2 mediates epithelial cell-specific fibroblast growth factor receptor 2 exon choice.</title>
        <authorList>
            <person name="Baraniak A.P."/>
            <person name="Chen J.R."/>
            <person name="Garcia-Blanco M.A."/>
        </authorList>
    </citation>
    <scope>FUNCTION</scope>
</reference>
<reference key="9">
    <citation type="journal article" date="2007" name="Mol. Cell. Biol.">
        <title>Role for Fox-1/Fox-2 in mediating the neuronal pathway of calcitonin/calcitonin gene-related peptide alternative RNA processing.</title>
        <authorList>
            <person name="Zhou H.-L."/>
            <person name="Baraniak A.P."/>
            <person name="Lou H."/>
        </authorList>
    </citation>
    <scope>FUNCTION</scope>
</reference>
<reference key="10">
    <citation type="journal article" date="2014" name="Mol. Cell. Proteomics">
        <title>Immunoaffinity enrichment and mass spectrometry analysis of protein methylation.</title>
        <authorList>
            <person name="Guo A."/>
            <person name="Gu H."/>
            <person name="Zhou J."/>
            <person name="Mulhern D."/>
            <person name="Wang Y."/>
            <person name="Lee K.A."/>
            <person name="Yang V."/>
            <person name="Aguiar M."/>
            <person name="Kornhauser J."/>
            <person name="Jia X."/>
            <person name="Ren J."/>
            <person name="Beausoleil S.A."/>
            <person name="Silva J.C."/>
            <person name="Vemulapalli V."/>
            <person name="Bedford M.T."/>
            <person name="Comb M.J."/>
        </authorList>
    </citation>
    <scope>METHYLATION [LARGE SCALE ANALYSIS] AT ARG-340; ARG-356; ARG-388; ARG-440 AND ARG-445</scope>
    <scope>METHYLATION [LARGE SCALE ANALYSIS] AT ARG-318 AND ARG-323 (ISOFORM 2)</scope>
    <scope>METHYLATION [LARGE SCALE ANALYSIS] AT ARG-236; ARG-241 AND ARG-285 (ISOFORM 4)</scope>
    <scope>METHYLATION [LARGE SCALE ANALYSIS] AT ARG-336 AND ARG-341 (ISOFORM 5)</scope>
    <scope>METHYLATION [LARGE SCALE ANALYSIS] AT ARG-268 AND ARG-273 (ISOFORMS 6; 7 AND 8)</scope>
    <scope>METHYLATION [LARGE SCALE ANALYSIS] AT ARG-317 (ISOFORM 8)</scope>
    <scope>IDENTIFICATION BY MASS SPECTROMETRY [LARGE SCALE ANALYSIS]</scope>
    <source>
        <tissue>Brain</tissue>
        <tissue>Embryo</tissue>
    </source>
</reference>
<comment type="function">
    <text evidence="1 2 7 8 9 10 11 12">RNA-binding protein that regulates alternative splicing events by binding to 5'-UGCAUGU-3' elements. Prevents binding of U2AF2 to the 3'-splice site. Regulates alternative splicing of tissue-specific exons and of differentially spliced exons during erythropoiesis. Seems to act as a coregulatory factor of ER-alpha (By similarity). Together with RNA binding proteins RBPMS and MBNL1/2, activates vascular smooth muscle cells alternative splicing events (By similarity).</text>
</comment>
<comment type="subunit">
    <text evidence="1 3">Interacts with ER-alpha N-terminal activation domain. Interacts with RBPMS; the interaction allows cooperative assembly of stable cell-specific alternative splicing regulatory complexes (By similarity).</text>
</comment>
<comment type="subcellular location">
    <subcellularLocation>
        <location>Nucleus</location>
    </subcellularLocation>
    <subcellularLocation>
        <location>Cytoplasm</location>
    </subcellularLocation>
</comment>
<comment type="alternative products">
    <event type="alternative splicing"/>
    <isoform>
        <id>Q8BP71-1</id>
        <name>1</name>
        <sequence type="displayed"/>
    </isoform>
    <isoform>
        <id>Q8BP71-2</id>
        <name>2</name>
        <name>Fox-2A</name>
        <sequence type="described" ref="VSP_030893 VSP_030897"/>
    </isoform>
    <isoform>
        <id>Q8BP71-3</id>
        <name>3</name>
        <name>1</name>
        <name>Fox-2F</name>
        <sequence type="described" ref="VSP_030892"/>
    </isoform>
    <isoform>
        <id>Q8BP71-4</id>
        <name>4</name>
        <name>2</name>
        <name>Fox-2F-S</name>
        <sequence type="described" ref="VSP_030892 VSP_030895 VSP_030896 VSP_030897 VSP_030898"/>
    </isoform>
    <isoform>
        <id>Q8BP71-5</id>
        <name>5</name>
        <sequence type="described" ref="VSP_030897 VSP_030899"/>
    </isoform>
    <isoform>
        <id>Q8BP71-6</id>
        <name>6</name>
        <sequence type="described" ref="VSP_030892 VSP_030897 VSP_030900"/>
    </isoform>
    <isoform>
        <id>Q8BP71-7</id>
        <name>7</name>
        <name>1</name>
        <name>F011</name>
        <sequence type="described" ref="VSP_030892 VSP_030897"/>
    </isoform>
    <isoform>
        <id>Q8BP71-8</id>
        <name>8</name>
        <name>2</name>
        <name>F411</name>
        <sequence type="described" ref="VSP_030892 VSP_030897 VSP_030898"/>
    </isoform>
    <isoform>
        <id>Q8BP71-9</id>
        <name>9</name>
        <name>3</name>
        <name>F402</name>
        <sequence type="described" ref="VSP_030892 VSP_030894"/>
    </isoform>
</comment>
<comment type="tissue specificity">
    <text evidence="6 8">Detected in brain neurons (at protein level). Detected in heart, brain, embryo, lung, liver, kidney and ovary.</text>
</comment>
<comment type="induction">
    <text evidence="6">Up-regulated by androgens in cultured motor neuron cells.</text>
</comment>
<keyword id="KW-0025">Alternative splicing</keyword>
<keyword id="KW-0963">Cytoplasm</keyword>
<keyword id="KW-0488">Methylation</keyword>
<keyword id="KW-0507">mRNA processing</keyword>
<keyword id="KW-0508">mRNA splicing</keyword>
<keyword id="KW-0539">Nucleus</keyword>
<keyword id="KW-1185">Reference proteome</keyword>
<keyword id="KW-0694">RNA-binding</keyword>
<evidence type="ECO:0000250" key="1"/>
<evidence type="ECO:0000250" key="2">
    <source>
        <dbReference type="UniProtKB" id="A1A5R1"/>
    </source>
</evidence>
<evidence type="ECO:0000250" key="3">
    <source>
        <dbReference type="UniProtKB" id="O43251"/>
    </source>
</evidence>
<evidence type="ECO:0000255" key="4">
    <source>
        <dbReference type="PROSITE-ProRule" id="PRU00176"/>
    </source>
</evidence>
<evidence type="ECO:0000256" key="5">
    <source>
        <dbReference type="SAM" id="MobiDB-lite"/>
    </source>
</evidence>
<evidence type="ECO:0000269" key="6">
    <source>
    </source>
</evidence>
<evidence type="ECO:0000269" key="7">
    <source>
    </source>
</evidence>
<evidence type="ECO:0000269" key="8">
    <source>
    </source>
</evidence>
<evidence type="ECO:0000269" key="9">
    <source>
    </source>
</evidence>
<evidence type="ECO:0000269" key="10">
    <source>
    </source>
</evidence>
<evidence type="ECO:0000269" key="11">
    <source>
    </source>
</evidence>
<evidence type="ECO:0000269" key="12">
    <source>
    </source>
</evidence>
<evidence type="ECO:0000303" key="13">
    <source>
    </source>
</evidence>
<evidence type="ECO:0000303" key="14">
    <source>
    </source>
</evidence>
<evidence type="ECO:0000303" key="15">
    <source>
    </source>
</evidence>
<evidence type="ECO:0000303" key="16">
    <source>
    </source>
</evidence>
<evidence type="ECO:0000303" key="17">
    <source>
    </source>
</evidence>
<evidence type="ECO:0000303" key="18">
    <source>
    </source>
</evidence>
<evidence type="ECO:0000305" key="19"/>
<evidence type="ECO:0007744" key="20">
    <source>
    </source>
</evidence>
<dbReference type="EMBL" id="AF387322">
    <property type="protein sequence ID" value="AAK64287.1"/>
    <property type="molecule type" value="mRNA"/>
</dbReference>
<dbReference type="EMBL" id="AY659951">
    <property type="protein sequence ID" value="AAV74334.1"/>
    <property type="molecule type" value="mRNA"/>
</dbReference>
<dbReference type="EMBL" id="AY659952">
    <property type="protein sequence ID" value="AAV74335.1"/>
    <property type="molecule type" value="mRNA"/>
</dbReference>
<dbReference type="EMBL" id="AY659953">
    <property type="protein sequence ID" value="AAV74336.1"/>
    <property type="molecule type" value="mRNA"/>
</dbReference>
<dbReference type="EMBL" id="AF229055">
    <property type="protein sequence ID" value="AAL71902.1"/>
    <property type="molecule type" value="mRNA"/>
</dbReference>
<dbReference type="EMBL" id="AY904025">
    <property type="protein sequence ID" value="AAX84842.1"/>
    <property type="molecule type" value="mRNA"/>
</dbReference>
<dbReference type="EMBL" id="DQ017388">
    <property type="protein sequence ID" value="AAY78494.1"/>
    <property type="molecule type" value="mRNA"/>
</dbReference>
<dbReference type="EMBL" id="DQ017389">
    <property type="protein sequence ID" value="AAY78495.1"/>
    <property type="molecule type" value="mRNA"/>
</dbReference>
<dbReference type="EMBL" id="AK044929">
    <property type="protein sequence ID" value="BAC32147.1"/>
    <property type="molecule type" value="mRNA"/>
</dbReference>
<dbReference type="EMBL" id="AK077594">
    <property type="protein sequence ID" value="BAC36885.1"/>
    <property type="molecule type" value="mRNA"/>
</dbReference>
<dbReference type="EMBL" id="BC002124">
    <property type="protein sequence ID" value="AAH02124.1"/>
    <property type="molecule type" value="mRNA"/>
</dbReference>
<dbReference type="EMBL" id="BC027263">
    <property type="protein sequence ID" value="AAH27263.1"/>
    <property type="molecule type" value="mRNA"/>
</dbReference>
<dbReference type="CCDS" id="CCDS27598.1">
    <molecule id="Q8BP71-5"/>
</dbReference>
<dbReference type="CCDS" id="CCDS49657.1">
    <molecule id="Q8BP71-8"/>
</dbReference>
<dbReference type="CCDS" id="CCDS49658.1">
    <molecule id="Q8BP71-3"/>
</dbReference>
<dbReference type="CCDS" id="CCDS49659.1">
    <molecule id="Q8BP71-1"/>
</dbReference>
<dbReference type="CCDS" id="CCDS88795.1">
    <molecule id="Q8BP71-9"/>
</dbReference>
<dbReference type="CCDS" id="CCDS88796.1">
    <molecule id="Q8BP71-4"/>
</dbReference>
<dbReference type="CCDS" id="CCDS88798.1">
    <molecule id="Q8BP71-7"/>
</dbReference>
<dbReference type="RefSeq" id="NP_001104297.1">
    <property type="nucleotide sequence ID" value="NM_001110827.2"/>
</dbReference>
<dbReference type="RefSeq" id="NP_001104298.1">
    <molecule id="Q8BP71-3"/>
    <property type="nucleotide sequence ID" value="NM_001110828.3"/>
</dbReference>
<dbReference type="RefSeq" id="NP_001104299.1">
    <molecule id="Q8BP71-8"/>
    <property type="nucleotide sequence ID" value="NM_001110829.3"/>
</dbReference>
<dbReference type="RefSeq" id="NP_001104300.1">
    <molecule id="Q8BP71-7"/>
    <property type="nucleotide sequence ID" value="NM_001110830.3"/>
</dbReference>
<dbReference type="RefSeq" id="NP_001273346.1">
    <property type="nucleotide sequence ID" value="NM_001286417.1"/>
</dbReference>
<dbReference type="RefSeq" id="NP_001273347.1">
    <molecule id="Q8BP71-9"/>
    <property type="nucleotide sequence ID" value="NM_001286418.2"/>
</dbReference>
<dbReference type="RefSeq" id="NP_001273348.1">
    <molecule id="Q8BP71-4"/>
    <property type="nucleotide sequence ID" value="NM_001286419.2"/>
</dbReference>
<dbReference type="RefSeq" id="NP_444334.3">
    <molecule id="Q8BP71-1"/>
    <property type="nucleotide sequence ID" value="NM_053104.6"/>
</dbReference>
<dbReference type="RefSeq" id="NP_780596.1">
    <molecule id="Q8BP71-5"/>
    <property type="nucleotide sequence ID" value="NM_175387.4"/>
</dbReference>
<dbReference type="SMR" id="Q8BP71"/>
<dbReference type="BioGRID" id="220236">
    <property type="interactions" value="10"/>
</dbReference>
<dbReference type="FunCoup" id="Q8BP71">
    <property type="interactions" value="2969"/>
</dbReference>
<dbReference type="IntAct" id="Q8BP71">
    <property type="interactions" value="3"/>
</dbReference>
<dbReference type="MINT" id="Q8BP71"/>
<dbReference type="STRING" id="10090.ENSMUSP00000130739"/>
<dbReference type="GlyGen" id="Q8BP71">
    <property type="glycosylation" value="1 site, 1 O-linked glycan (1 site)"/>
</dbReference>
<dbReference type="iPTMnet" id="Q8BP71"/>
<dbReference type="PhosphoSitePlus" id="Q8BP71"/>
<dbReference type="PaxDb" id="10090-ENSMUSP00000130739"/>
<dbReference type="PeptideAtlas" id="Q8BP71"/>
<dbReference type="ProteomicsDB" id="255307">
    <molecule id="Q8BP71-1"/>
</dbReference>
<dbReference type="ProteomicsDB" id="255308">
    <molecule id="Q8BP71-2"/>
</dbReference>
<dbReference type="ProteomicsDB" id="255309">
    <molecule id="Q8BP71-3"/>
</dbReference>
<dbReference type="ProteomicsDB" id="255310">
    <molecule id="Q8BP71-4"/>
</dbReference>
<dbReference type="ProteomicsDB" id="255311">
    <molecule id="Q8BP71-5"/>
</dbReference>
<dbReference type="ProteomicsDB" id="255312">
    <molecule id="Q8BP71-6"/>
</dbReference>
<dbReference type="ProteomicsDB" id="255313">
    <molecule id="Q8BP71-7"/>
</dbReference>
<dbReference type="ProteomicsDB" id="255314">
    <molecule id="Q8BP71-8"/>
</dbReference>
<dbReference type="ProteomicsDB" id="255315">
    <molecule id="Q8BP71-9"/>
</dbReference>
<dbReference type="Pumba" id="Q8BP71"/>
<dbReference type="Antibodypedia" id="331">
    <property type="antibodies" value="261 antibodies from 29 providers"/>
</dbReference>
<dbReference type="DNASU" id="93686"/>
<dbReference type="Ensembl" id="ENSMUST00000048145.13">
    <molecule id="Q8BP71-5"/>
    <property type="protein sequence ID" value="ENSMUSP00000048056.6"/>
    <property type="gene ID" value="ENSMUSG00000033565.20"/>
</dbReference>
<dbReference type="Ensembl" id="ENSMUST00000171751.10">
    <molecule id="Q8BP71-1"/>
    <property type="protein sequence ID" value="ENSMUSP00000130739.2"/>
    <property type="gene ID" value="ENSMUSG00000033565.20"/>
</dbReference>
<dbReference type="Ensembl" id="ENSMUST00000227314.2">
    <molecule id="Q8BP71-8"/>
    <property type="protein sequence ID" value="ENSMUSP00000154233.2"/>
    <property type="gene ID" value="ENSMUSG00000033565.20"/>
</dbReference>
<dbReference type="Ensembl" id="ENSMUST00000227533.2">
    <molecule id="Q8BP71-4"/>
    <property type="protein sequence ID" value="ENSMUSP00000154209.2"/>
    <property type="gene ID" value="ENSMUSG00000033565.20"/>
</dbReference>
<dbReference type="Ensembl" id="ENSMUST00000227930.2">
    <molecule id="Q8BP71-9"/>
    <property type="protein sequence ID" value="ENSMUSP00000154810.2"/>
    <property type="gene ID" value="ENSMUSG00000033565.20"/>
</dbReference>
<dbReference type="Ensembl" id="ENSMUST00000228087.2">
    <molecule id="Q8BP71-7"/>
    <property type="protein sequence ID" value="ENSMUSP00000153751.2"/>
    <property type="gene ID" value="ENSMUSG00000033565.20"/>
</dbReference>
<dbReference type="GeneID" id="93686"/>
<dbReference type="KEGG" id="mmu:93686"/>
<dbReference type="UCSC" id="uc007wnc.3">
    <molecule id="Q8BP71-5"/>
    <property type="organism name" value="mouse"/>
</dbReference>
<dbReference type="UCSC" id="uc007wnd.2">
    <molecule id="Q8BP71-7"/>
    <property type="organism name" value="mouse"/>
</dbReference>
<dbReference type="UCSC" id="uc007wne.2">
    <molecule id="Q8BP71-8"/>
    <property type="organism name" value="mouse"/>
</dbReference>
<dbReference type="UCSC" id="uc007wnf.2">
    <molecule id="Q8BP71-4"/>
    <property type="organism name" value="mouse"/>
</dbReference>
<dbReference type="UCSC" id="uc007wng.2">
    <molecule id="Q8BP71-1"/>
    <property type="organism name" value="mouse"/>
</dbReference>
<dbReference type="UCSC" id="uc007wni.2">
    <molecule id="Q8BP71-2"/>
    <property type="organism name" value="mouse"/>
</dbReference>
<dbReference type="UCSC" id="uc011zvf.1">
    <molecule id="Q8BP71-3"/>
    <property type="organism name" value="mouse"/>
</dbReference>
<dbReference type="UCSC" id="uc011zvg.2">
    <molecule id="Q8BP71-9"/>
    <property type="organism name" value="mouse"/>
</dbReference>
<dbReference type="AGR" id="MGI:1933973"/>
<dbReference type="CTD" id="23543"/>
<dbReference type="MGI" id="MGI:1933973">
    <property type="gene designation" value="Rbfox2"/>
</dbReference>
<dbReference type="VEuPathDB" id="HostDB:ENSMUSG00000033565"/>
<dbReference type="eggNOG" id="KOG0125">
    <property type="taxonomic scope" value="Eukaryota"/>
</dbReference>
<dbReference type="GeneTree" id="ENSGT00940000157534"/>
<dbReference type="HOGENOM" id="CLU_048440_0_1_1"/>
<dbReference type="InParanoid" id="Q8BP71"/>
<dbReference type="OMA" id="HDENTTH"/>
<dbReference type="OrthoDB" id="5382468at2759"/>
<dbReference type="PhylomeDB" id="Q8BP71"/>
<dbReference type="TreeFam" id="TF315942"/>
<dbReference type="BioGRID-ORCS" id="93686">
    <property type="hits" value="10 hits in 78 CRISPR screens"/>
</dbReference>
<dbReference type="ChiTaRS" id="Rbfox2">
    <property type="organism name" value="mouse"/>
</dbReference>
<dbReference type="PRO" id="PR:Q8BP71"/>
<dbReference type="Proteomes" id="UP000000589">
    <property type="component" value="Chromosome 15"/>
</dbReference>
<dbReference type="RNAct" id="Q8BP71">
    <property type="molecule type" value="protein"/>
</dbReference>
<dbReference type="Bgee" id="ENSMUSG00000033565">
    <property type="expression patterns" value="Expressed in cortical plate and 228 other cell types or tissues"/>
</dbReference>
<dbReference type="ExpressionAtlas" id="Q8BP71">
    <property type="expression patterns" value="baseline and differential"/>
</dbReference>
<dbReference type="GO" id="GO:0005737">
    <property type="term" value="C:cytoplasm"/>
    <property type="evidence" value="ECO:0007669"/>
    <property type="project" value="UniProtKB-SubCell"/>
</dbReference>
<dbReference type="GO" id="GO:0005634">
    <property type="term" value="C:nucleus"/>
    <property type="evidence" value="ECO:0000314"/>
    <property type="project" value="BHF-UCL"/>
</dbReference>
<dbReference type="GO" id="GO:0140297">
    <property type="term" value="F:DNA-binding transcription factor binding"/>
    <property type="evidence" value="ECO:0000250"/>
    <property type="project" value="UniProtKB"/>
</dbReference>
<dbReference type="GO" id="GO:0003729">
    <property type="term" value="F:mRNA binding"/>
    <property type="evidence" value="ECO:0000314"/>
    <property type="project" value="MGI"/>
</dbReference>
<dbReference type="GO" id="GO:0003723">
    <property type="term" value="F:RNA binding"/>
    <property type="evidence" value="ECO:0000250"/>
    <property type="project" value="UniProtKB"/>
</dbReference>
<dbReference type="GO" id="GO:0003727">
    <property type="term" value="F:single-stranded RNA binding"/>
    <property type="evidence" value="ECO:0007669"/>
    <property type="project" value="Ensembl"/>
</dbReference>
<dbReference type="GO" id="GO:0003714">
    <property type="term" value="F:transcription corepressor activity"/>
    <property type="evidence" value="ECO:0000250"/>
    <property type="project" value="UniProtKB"/>
</dbReference>
<dbReference type="GO" id="GO:0000380">
    <property type="term" value="P:alternative mRNA splicing, via spliceosome"/>
    <property type="evidence" value="ECO:0000314"/>
    <property type="project" value="MGI"/>
</dbReference>
<dbReference type="GO" id="GO:0061337">
    <property type="term" value="P:cardiac conduction"/>
    <property type="evidence" value="ECO:0000315"/>
    <property type="project" value="MGI"/>
</dbReference>
<dbReference type="GO" id="GO:1904385">
    <property type="term" value="P:cellular response to angiotensin"/>
    <property type="evidence" value="ECO:0007669"/>
    <property type="project" value="Ensembl"/>
</dbReference>
<dbReference type="GO" id="GO:1990859">
    <property type="term" value="P:cellular response to endothelin"/>
    <property type="evidence" value="ECO:0007669"/>
    <property type="project" value="Ensembl"/>
</dbReference>
<dbReference type="GO" id="GO:0070301">
    <property type="term" value="P:cellular response to hydrogen peroxide"/>
    <property type="evidence" value="ECO:0007669"/>
    <property type="project" value="Ensembl"/>
</dbReference>
<dbReference type="GO" id="GO:0071300">
    <property type="term" value="P:cellular response to retinoic acid"/>
    <property type="evidence" value="ECO:0007669"/>
    <property type="project" value="Ensembl"/>
</dbReference>
<dbReference type="GO" id="GO:0048813">
    <property type="term" value="P:dendrite morphogenesis"/>
    <property type="evidence" value="ECO:0000315"/>
    <property type="project" value="MGI"/>
</dbReference>
<dbReference type="GO" id="GO:0030520">
    <property type="term" value="P:estrogen receptor signaling pathway"/>
    <property type="evidence" value="ECO:0000250"/>
    <property type="project" value="UniProtKB"/>
</dbReference>
<dbReference type="GO" id="GO:0007507">
    <property type="term" value="P:heart development"/>
    <property type="evidence" value="ECO:0007669"/>
    <property type="project" value="Ensembl"/>
</dbReference>
<dbReference type="GO" id="GO:0110104">
    <property type="term" value="P:mRNA alternative polyadenylation"/>
    <property type="evidence" value="ECO:0007669"/>
    <property type="project" value="Ensembl"/>
</dbReference>
<dbReference type="GO" id="GO:0043066">
    <property type="term" value="P:negative regulation of apoptotic process"/>
    <property type="evidence" value="ECO:0007669"/>
    <property type="project" value="Ensembl"/>
</dbReference>
<dbReference type="GO" id="GO:0045892">
    <property type="term" value="P:negative regulation of DNA-templated transcription"/>
    <property type="evidence" value="ECO:0000250"/>
    <property type="project" value="UniProtKB"/>
</dbReference>
<dbReference type="GO" id="GO:1902631">
    <property type="term" value="P:negative regulation of membrane hyperpolarization"/>
    <property type="evidence" value="ECO:0007669"/>
    <property type="project" value="Ensembl"/>
</dbReference>
<dbReference type="GO" id="GO:0051902">
    <property type="term" value="P:negative regulation of mitochondrial depolarization"/>
    <property type="evidence" value="ECO:0007669"/>
    <property type="project" value="Ensembl"/>
</dbReference>
<dbReference type="GO" id="GO:0050885">
    <property type="term" value="P:neuromuscular process controlling balance"/>
    <property type="evidence" value="ECO:0000316"/>
    <property type="project" value="MGI"/>
</dbReference>
<dbReference type="GO" id="GO:0010628">
    <property type="term" value="P:positive regulation of gene expression"/>
    <property type="evidence" value="ECO:0007669"/>
    <property type="project" value="Ensembl"/>
</dbReference>
<dbReference type="GO" id="GO:0045907">
    <property type="term" value="P:positive regulation of vasoconstriction"/>
    <property type="evidence" value="ECO:0007669"/>
    <property type="project" value="Ensembl"/>
</dbReference>
<dbReference type="GO" id="GO:0021942">
    <property type="term" value="P:radial glia guided migration of Purkinje cell"/>
    <property type="evidence" value="ECO:0000315"/>
    <property type="project" value="MGI"/>
</dbReference>
<dbReference type="GO" id="GO:0000381">
    <property type="term" value="P:regulation of alternative mRNA splicing, via spliceosome"/>
    <property type="evidence" value="ECO:0000315"/>
    <property type="project" value="BHF-UCL"/>
</dbReference>
<dbReference type="GO" id="GO:0010724">
    <property type="term" value="P:regulation of definitive erythrocyte differentiation"/>
    <property type="evidence" value="ECO:0000314"/>
    <property type="project" value="BHF-UCL"/>
</dbReference>
<dbReference type="GO" id="GO:0086091">
    <property type="term" value="P:regulation of heart rate by cardiac conduction"/>
    <property type="evidence" value="ECO:0000315"/>
    <property type="project" value="MGI"/>
</dbReference>
<dbReference type="GO" id="GO:0062125">
    <property type="term" value="P:regulation of mitochondrial gene expression"/>
    <property type="evidence" value="ECO:0007669"/>
    <property type="project" value="Ensembl"/>
</dbReference>
<dbReference type="GO" id="GO:0008380">
    <property type="term" value="P:RNA splicing"/>
    <property type="evidence" value="ECO:0007669"/>
    <property type="project" value="UniProtKB-KW"/>
</dbReference>
<dbReference type="CDD" id="cd12407">
    <property type="entry name" value="RRM_FOX1_like"/>
    <property type="match status" value="1"/>
</dbReference>
<dbReference type="FunFam" id="3.30.70.330:FF:000375">
    <property type="entry name" value="RNA binding fox-1 homolog 1"/>
    <property type="match status" value="1"/>
</dbReference>
<dbReference type="Gene3D" id="3.30.70.330">
    <property type="match status" value="1"/>
</dbReference>
<dbReference type="InterPro" id="IPR025670">
    <property type="entry name" value="Fox-1_C_dom"/>
</dbReference>
<dbReference type="InterPro" id="IPR034237">
    <property type="entry name" value="FOX1_RRM"/>
</dbReference>
<dbReference type="InterPro" id="IPR012677">
    <property type="entry name" value="Nucleotide-bd_a/b_plait_sf"/>
</dbReference>
<dbReference type="InterPro" id="IPR035979">
    <property type="entry name" value="RBD_domain_sf"/>
</dbReference>
<dbReference type="InterPro" id="IPR017325">
    <property type="entry name" value="RBFOX1-3"/>
</dbReference>
<dbReference type="InterPro" id="IPR047131">
    <property type="entry name" value="RBFOX1-like"/>
</dbReference>
<dbReference type="InterPro" id="IPR000504">
    <property type="entry name" value="RRM_dom"/>
</dbReference>
<dbReference type="PANTHER" id="PTHR15597">
    <property type="entry name" value="ATAXIN 2-BINDING PROTEIN 1-RELATED"/>
    <property type="match status" value="1"/>
</dbReference>
<dbReference type="PANTHER" id="PTHR15597:SF31">
    <property type="entry name" value="RNA BINDING PROTEIN FOX-1 HOMOLOG 2"/>
    <property type="match status" value="1"/>
</dbReference>
<dbReference type="Pfam" id="PF12414">
    <property type="entry name" value="Fox-1_C"/>
    <property type="match status" value="1"/>
</dbReference>
<dbReference type="Pfam" id="PF00076">
    <property type="entry name" value="RRM_1"/>
    <property type="match status" value="1"/>
</dbReference>
<dbReference type="PIRSF" id="PIRSF037932">
    <property type="entry name" value="Ataxin_2_bd_A2BP"/>
    <property type="match status" value="1"/>
</dbReference>
<dbReference type="SMART" id="SM00360">
    <property type="entry name" value="RRM"/>
    <property type="match status" value="1"/>
</dbReference>
<dbReference type="SUPFAM" id="SSF54928">
    <property type="entry name" value="RNA-binding domain, RBD"/>
    <property type="match status" value="1"/>
</dbReference>
<dbReference type="PROSITE" id="PS50102">
    <property type="entry name" value="RRM"/>
    <property type="match status" value="1"/>
</dbReference>